<organism>
    <name type="scientific">Methylococcus capsulatus (strain ATCC 33009 / NCIMB 11132 / Bath)</name>
    <dbReference type="NCBI Taxonomy" id="243233"/>
    <lineage>
        <taxon>Bacteria</taxon>
        <taxon>Pseudomonadati</taxon>
        <taxon>Pseudomonadota</taxon>
        <taxon>Gammaproteobacteria</taxon>
        <taxon>Methylococcales</taxon>
        <taxon>Methylococcaceae</taxon>
        <taxon>Methylococcus</taxon>
    </lineage>
</organism>
<name>MIAB_METCA</name>
<dbReference type="EC" id="2.8.4.3" evidence="1"/>
<dbReference type="EMBL" id="AE017282">
    <property type="protein sequence ID" value="AAU92533.1"/>
    <property type="molecule type" value="Genomic_DNA"/>
</dbReference>
<dbReference type="RefSeq" id="WP_010960735.1">
    <property type="nucleotide sequence ID" value="NC_002977.6"/>
</dbReference>
<dbReference type="SMR" id="Q608N1"/>
<dbReference type="STRING" id="243233.MCA1459"/>
<dbReference type="GeneID" id="88223732"/>
<dbReference type="KEGG" id="mca:MCA1459"/>
<dbReference type="eggNOG" id="COG0621">
    <property type="taxonomic scope" value="Bacteria"/>
</dbReference>
<dbReference type="HOGENOM" id="CLU_018697_2_0_6"/>
<dbReference type="Proteomes" id="UP000006821">
    <property type="component" value="Chromosome"/>
</dbReference>
<dbReference type="GO" id="GO:0005829">
    <property type="term" value="C:cytosol"/>
    <property type="evidence" value="ECO:0007669"/>
    <property type="project" value="TreeGrafter"/>
</dbReference>
<dbReference type="GO" id="GO:0051539">
    <property type="term" value="F:4 iron, 4 sulfur cluster binding"/>
    <property type="evidence" value="ECO:0007669"/>
    <property type="project" value="UniProtKB-UniRule"/>
</dbReference>
<dbReference type="GO" id="GO:0046872">
    <property type="term" value="F:metal ion binding"/>
    <property type="evidence" value="ECO:0007669"/>
    <property type="project" value="UniProtKB-KW"/>
</dbReference>
<dbReference type="GO" id="GO:0035597">
    <property type="term" value="F:N6-isopentenyladenosine methylthiotransferase activity"/>
    <property type="evidence" value="ECO:0007669"/>
    <property type="project" value="TreeGrafter"/>
</dbReference>
<dbReference type="CDD" id="cd01335">
    <property type="entry name" value="Radical_SAM"/>
    <property type="match status" value="1"/>
</dbReference>
<dbReference type="FunFam" id="3.40.50.12160:FF:000001">
    <property type="entry name" value="tRNA-2-methylthio-N(6)-dimethylallyladenosine synthase"/>
    <property type="match status" value="1"/>
</dbReference>
<dbReference type="FunFam" id="3.80.30.20:FF:000001">
    <property type="entry name" value="tRNA-2-methylthio-N(6)-dimethylallyladenosine synthase 2"/>
    <property type="match status" value="1"/>
</dbReference>
<dbReference type="Gene3D" id="3.40.50.12160">
    <property type="entry name" value="Methylthiotransferase, N-terminal domain"/>
    <property type="match status" value="1"/>
</dbReference>
<dbReference type="Gene3D" id="3.80.30.20">
    <property type="entry name" value="tm_1862 like domain"/>
    <property type="match status" value="1"/>
</dbReference>
<dbReference type="HAMAP" id="MF_01864">
    <property type="entry name" value="tRNA_metthiotr_MiaB"/>
    <property type="match status" value="1"/>
</dbReference>
<dbReference type="InterPro" id="IPR006638">
    <property type="entry name" value="Elp3/MiaA/NifB-like_rSAM"/>
</dbReference>
<dbReference type="InterPro" id="IPR005839">
    <property type="entry name" value="Methylthiotransferase"/>
</dbReference>
<dbReference type="InterPro" id="IPR020612">
    <property type="entry name" value="Methylthiotransferase_CS"/>
</dbReference>
<dbReference type="InterPro" id="IPR013848">
    <property type="entry name" value="Methylthiotransferase_N"/>
</dbReference>
<dbReference type="InterPro" id="IPR038135">
    <property type="entry name" value="Methylthiotransferase_N_sf"/>
</dbReference>
<dbReference type="InterPro" id="IPR006463">
    <property type="entry name" value="MiaB_methiolase"/>
</dbReference>
<dbReference type="InterPro" id="IPR007197">
    <property type="entry name" value="rSAM"/>
</dbReference>
<dbReference type="InterPro" id="IPR023404">
    <property type="entry name" value="rSAM_horseshoe"/>
</dbReference>
<dbReference type="InterPro" id="IPR002792">
    <property type="entry name" value="TRAM_dom"/>
</dbReference>
<dbReference type="NCBIfam" id="TIGR01574">
    <property type="entry name" value="miaB-methiolase"/>
    <property type="match status" value="1"/>
</dbReference>
<dbReference type="NCBIfam" id="TIGR00089">
    <property type="entry name" value="MiaB/RimO family radical SAM methylthiotransferase"/>
    <property type="match status" value="1"/>
</dbReference>
<dbReference type="PANTHER" id="PTHR43020">
    <property type="entry name" value="CDK5 REGULATORY SUBUNIT-ASSOCIATED PROTEIN 1"/>
    <property type="match status" value="1"/>
</dbReference>
<dbReference type="PANTHER" id="PTHR43020:SF2">
    <property type="entry name" value="MITOCHONDRIAL TRNA METHYLTHIOTRANSFERASE CDK5RAP1"/>
    <property type="match status" value="1"/>
</dbReference>
<dbReference type="Pfam" id="PF04055">
    <property type="entry name" value="Radical_SAM"/>
    <property type="match status" value="1"/>
</dbReference>
<dbReference type="Pfam" id="PF01938">
    <property type="entry name" value="TRAM"/>
    <property type="match status" value="1"/>
</dbReference>
<dbReference type="Pfam" id="PF00919">
    <property type="entry name" value="UPF0004"/>
    <property type="match status" value="1"/>
</dbReference>
<dbReference type="SFLD" id="SFLDF00273">
    <property type="entry name" value="(dimethylallyl)adenosine_tRNA"/>
    <property type="match status" value="1"/>
</dbReference>
<dbReference type="SFLD" id="SFLDG01082">
    <property type="entry name" value="B12-binding_domain_containing"/>
    <property type="match status" value="1"/>
</dbReference>
<dbReference type="SFLD" id="SFLDG01061">
    <property type="entry name" value="methylthiotransferase"/>
    <property type="match status" value="1"/>
</dbReference>
<dbReference type="SMART" id="SM00729">
    <property type="entry name" value="Elp3"/>
    <property type="match status" value="1"/>
</dbReference>
<dbReference type="SUPFAM" id="SSF102114">
    <property type="entry name" value="Radical SAM enzymes"/>
    <property type="match status" value="1"/>
</dbReference>
<dbReference type="PROSITE" id="PS51449">
    <property type="entry name" value="MTTASE_N"/>
    <property type="match status" value="1"/>
</dbReference>
<dbReference type="PROSITE" id="PS01278">
    <property type="entry name" value="MTTASE_RADICAL"/>
    <property type="match status" value="1"/>
</dbReference>
<dbReference type="PROSITE" id="PS51918">
    <property type="entry name" value="RADICAL_SAM"/>
    <property type="match status" value="1"/>
</dbReference>
<dbReference type="PROSITE" id="PS50926">
    <property type="entry name" value="TRAM"/>
    <property type="match status" value="1"/>
</dbReference>
<comment type="function">
    <text evidence="1">Catalyzes the methylthiolation of N6-(dimethylallyl)adenosine (i(6)A), leading to the formation of 2-methylthio-N6-(dimethylallyl)adenosine (ms(2)i(6)A) at position 37 in tRNAs that read codons beginning with uridine.</text>
</comment>
<comment type="catalytic activity">
    <reaction evidence="1">
        <text>N(6)-dimethylallyladenosine(37) in tRNA + (sulfur carrier)-SH + AH2 + 2 S-adenosyl-L-methionine = 2-methylsulfanyl-N(6)-dimethylallyladenosine(37) in tRNA + (sulfur carrier)-H + 5'-deoxyadenosine + L-methionine + A + S-adenosyl-L-homocysteine + 2 H(+)</text>
        <dbReference type="Rhea" id="RHEA:37067"/>
        <dbReference type="Rhea" id="RHEA-COMP:10375"/>
        <dbReference type="Rhea" id="RHEA-COMP:10376"/>
        <dbReference type="Rhea" id="RHEA-COMP:14737"/>
        <dbReference type="Rhea" id="RHEA-COMP:14739"/>
        <dbReference type="ChEBI" id="CHEBI:13193"/>
        <dbReference type="ChEBI" id="CHEBI:15378"/>
        <dbReference type="ChEBI" id="CHEBI:17319"/>
        <dbReference type="ChEBI" id="CHEBI:17499"/>
        <dbReference type="ChEBI" id="CHEBI:29917"/>
        <dbReference type="ChEBI" id="CHEBI:57844"/>
        <dbReference type="ChEBI" id="CHEBI:57856"/>
        <dbReference type="ChEBI" id="CHEBI:59789"/>
        <dbReference type="ChEBI" id="CHEBI:64428"/>
        <dbReference type="ChEBI" id="CHEBI:74415"/>
        <dbReference type="ChEBI" id="CHEBI:74417"/>
        <dbReference type="EC" id="2.8.4.3"/>
    </reaction>
</comment>
<comment type="cofactor">
    <cofactor evidence="1">
        <name>[4Fe-4S] cluster</name>
        <dbReference type="ChEBI" id="CHEBI:49883"/>
    </cofactor>
    <text evidence="1">Binds 2 [4Fe-4S] clusters. One cluster is coordinated with 3 cysteines and an exchangeable S-adenosyl-L-methionine.</text>
</comment>
<comment type="subunit">
    <text evidence="1">Monomer.</text>
</comment>
<comment type="subcellular location">
    <subcellularLocation>
        <location evidence="1">Cytoplasm</location>
    </subcellularLocation>
</comment>
<comment type="similarity">
    <text evidence="1">Belongs to the methylthiotransferase family. MiaB subfamily.</text>
</comment>
<accession>Q608N1</accession>
<reference key="1">
    <citation type="journal article" date="2004" name="PLoS Biol.">
        <title>Genomic insights into methanotrophy: the complete genome sequence of Methylococcus capsulatus (Bath).</title>
        <authorList>
            <person name="Ward N.L."/>
            <person name="Larsen O."/>
            <person name="Sakwa J."/>
            <person name="Bruseth L."/>
            <person name="Khouri H.M."/>
            <person name="Durkin A.S."/>
            <person name="Dimitrov G."/>
            <person name="Jiang L."/>
            <person name="Scanlan D."/>
            <person name="Kang K.H."/>
            <person name="Lewis M.R."/>
            <person name="Nelson K.E."/>
            <person name="Methe B.A."/>
            <person name="Wu M."/>
            <person name="Heidelberg J.F."/>
            <person name="Paulsen I.T."/>
            <person name="Fouts D.E."/>
            <person name="Ravel J."/>
            <person name="Tettelin H."/>
            <person name="Ren Q."/>
            <person name="Read T.D."/>
            <person name="DeBoy R.T."/>
            <person name="Seshadri R."/>
            <person name="Salzberg S.L."/>
            <person name="Jensen H.B."/>
            <person name="Birkeland N.K."/>
            <person name="Nelson W.C."/>
            <person name="Dodson R.J."/>
            <person name="Grindhaug S.H."/>
            <person name="Holt I.E."/>
            <person name="Eidhammer I."/>
            <person name="Jonasen I."/>
            <person name="Vanaken S."/>
            <person name="Utterback T.R."/>
            <person name="Feldblyum T.V."/>
            <person name="Fraser C.M."/>
            <person name="Lillehaug J.R."/>
            <person name="Eisen J.A."/>
        </authorList>
    </citation>
    <scope>NUCLEOTIDE SEQUENCE [LARGE SCALE GENOMIC DNA]</scope>
    <source>
        <strain>ATCC 33009 / NCIMB 11132 / Bath</strain>
    </source>
</reference>
<evidence type="ECO:0000255" key="1">
    <source>
        <dbReference type="HAMAP-Rule" id="MF_01864"/>
    </source>
</evidence>
<evidence type="ECO:0000255" key="2">
    <source>
        <dbReference type="PROSITE-ProRule" id="PRU01266"/>
    </source>
</evidence>
<sequence length="458" mass="50549">MPQKLYIETFGCQMNEYDSAKMRDLLEVSDSFELARSPEEADVLLLNTCSIRDKAQEKVFSQLGRWRPIKLRRPEVVIGVGGCVASQEGEALQKRAPYVDIVFGPQTLHRLPSMLEQVRCERRPVVDVSFPAIEKFDALPEPRADGPKAFVSVMEGCGKYCTFCVVPYTRGEEISRPVDDVIAEIVALAEQGVREVNLLGQNVNAYRGVLADGGMADLALLMHYVAAVDGIDRIRFTTSHPVEFSDALIEAFRDIPQLVSHLHLPVQSGSDRILRLMKRGHTRAEYMAKVAKLREIRPDLSLSSDFIVGFPGETDEDFEDTMALIEQLGFDQSFSFIFSARPGTPAAAMADDVPPETKRARLARLQAKIADNAAKIGASMVGSIQSVLVEGTSRKNFNELSGRTENNRVVNFAGHPRLIGQFVDVVITESLPNSLRGRLIGVAHESDFISPDSTAQIA</sequence>
<proteinExistence type="inferred from homology"/>
<keyword id="KW-0004">4Fe-4S</keyword>
<keyword id="KW-0963">Cytoplasm</keyword>
<keyword id="KW-0408">Iron</keyword>
<keyword id="KW-0411">Iron-sulfur</keyword>
<keyword id="KW-0479">Metal-binding</keyword>
<keyword id="KW-1185">Reference proteome</keyword>
<keyword id="KW-0949">S-adenosyl-L-methionine</keyword>
<keyword id="KW-0808">Transferase</keyword>
<keyword id="KW-0819">tRNA processing</keyword>
<feature type="chain" id="PRO_0000374381" description="tRNA-2-methylthio-N(6)-dimethylallyladenosine synthase">
    <location>
        <begin position="1"/>
        <end position="458"/>
    </location>
</feature>
<feature type="domain" description="MTTase N-terminal" evidence="1">
    <location>
        <begin position="3"/>
        <end position="120"/>
    </location>
</feature>
<feature type="domain" description="Radical SAM core" evidence="2">
    <location>
        <begin position="143"/>
        <end position="375"/>
    </location>
</feature>
<feature type="domain" description="TRAM" evidence="1">
    <location>
        <begin position="378"/>
        <end position="441"/>
    </location>
</feature>
<feature type="binding site" evidence="1">
    <location>
        <position position="12"/>
    </location>
    <ligand>
        <name>[4Fe-4S] cluster</name>
        <dbReference type="ChEBI" id="CHEBI:49883"/>
        <label>1</label>
    </ligand>
</feature>
<feature type="binding site" evidence="1">
    <location>
        <position position="49"/>
    </location>
    <ligand>
        <name>[4Fe-4S] cluster</name>
        <dbReference type="ChEBI" id="CHEBI:49883"/>
        <label>1</label>
    </ligand>
</feature>
<feature type="binding site" evidence="1">
    <location>
        <position position="83"/>
    </location>
    <ligand>
        <name>[4Fe-4S] cluster</name>
        <dbReference type="ChEBI" id="CHEBI:49883"/>
        <label>1</label>
    </ligand>
</feature>
<feature type="binding site" evidence="1">
    <location>
        <position position="157"/>
    </location>
    <ligand>
        <name>[4Fe-4S] cluster</name>
        <dbReference type="ChEBI" id="CHEBI:49883"/>
        <label>2</label>
        <note>4Fe-4S-S-AdoMet</note>
    </ligand>
</feature>
<feature type="binding site" evidence="1">
    <location>
        <position position="161"/>
    </location>
    <ligand>
        <name>[4Fe-4S] cluster</name>
        <dbReference type="ChEBI" id="CHEBI:49883"/>
        <label>2</label>
        <note>4Fe-4S-S-AdoMet</note>
    </ligand>
</feature>
<feature type="binding site" evidence="1">
    <location>
        <position position="164"/>
    </location>
    <ligand>
        <name>[4Fe-4S] cluster</name>
        <dbReference type="ChEBI" id="CHEBI:49883"/>
        <label>2</label>
        <note>4Fe-4S-S-AdoMet</note>
    </ligand>
</feature>
<protein>
    <recommendedName>
        <fullName evidence="1">tRNA-2-methylthio-N(6)-dimethylallyladenosine synthase</fullName>
        <ecNumber evidence="1">2.8.4.3</ecNumber>
    </recommendedName>
    <alternativeName>
        <fullName evidence="1">(Dimethylallyl)adenosine tRNA methylthiotransferase MiaB</fullName>
    </alternativeName>
    <alternativeName>
        <fullName evidence="1">tRNA-i(6)A37 methylthiotransferase</fullName>
    </alternativeName>
</protein>
<gene>
    <name evidence="1" type="primary">miaB</name>
    <name type="ordered locus">MCA1459</name>
</gene>